<protein>
    <recommendedName>
        <fullName evidence="1">Gamma-glutamyl phosphate reductase</fullName>
        <shortName evidence="1">GPR</shortName>
        <ecNumber evidence="1">1.2.1.41</ecNumber>
    </recommendedName>
    <alternativeName>
        <fullName evidence="1">Glutamate-5-semialdehyde dehydrogenase</fullName>
    </alternativeName>
    <alternativeName>
        <fullName evidence="1">Glutamyl-gamma-semialdehyde dehydrogenase</fullName>
        <shortName evidence="1">GSA dehydrogenase</shortName>
    </alternativeName>
</protein>
<reference key="1">
    <citation type="submission" date="2008-05" db="EMBL/GenBank/DDBJ databases">
        <title>Complete genome sequence of Clostridium botulinum E3 str. Alaska E43.</title>
        <authorList>
            <person name="Brinkac L.M."/>
            <person name="Brown J.L."/>
            <person name="Bruce D."/>
            <person name="Detter C."/>
            <person name="Munk C."/>
            <person name="Smith L.A."/>
            <person name="Smith T.J."/>
            <person name="Sutton G."/>
            <person name="Brettin T.S."/>
        </authorList>
    </citation>
    <scope>NUCLEOTIDE SEQUENCE [LARGE SCALE GENOMIC DNA]</scope>
    <source>
        <strain>Alaska E43 / Type E3</strain>
    </source>
</reference>
<accession>B2UX78</accession>
<dbReference type="EC" id="1.2.1.41" evidence="1"/>
<dbReference type="EMBL" id="CP001078">
    <property type="protein sequence ID" value="ACD53888.1"/>
    <property type="molecule type" value="Genomic_DNA"/>
</dbReference>
<dbReference type="RefSeq" id="WP_012451703.1">
    <property type="nucleotide sequence ID" value="NC_010723.1"/>
</dbReference>
<dbReference type="SMR" id="B2UX78"/>
<dbReference type="KEGG" id="cbt:CLH_0047"/>
<dbReference type="HOGENOM" id="CLU_030231_0_0_9"/>
<dbReference type="UniPathway" id="UPA00098">
    <property type="reaction ID" value="UER00360"/>
</dbReference>
<dbReference type="GO" id="GO:0005737">
    <property type="term" value="C:cytoplasm"/>
    <property type="evidence" value="ECO:0007669"/>
    <property type="project" value="UniProtKB-SubCell"/>
</dbReference>
<dbReference type="GO" id="GO:0004350">
    <property type="term" value="F:glutamate-5-semialdehyde dehydrogenase activity"/>
    <property type="evidence" value="ECO:0007669"/>
    <property type="project" value="UniProtKB-UniRule"/>
</dbReference>
<dbReference type="GO" id="GO:0050661">
    <property type="term" value="F:NADP binding"/>
    <property type="evidence" value="ECO:0007669"/>
    <property type="project" value="InterPro"/>
</dbReference>
<dbReference type="GO" id="GO:0055129">
    <property type="term" value="P:L-proline biosynthetic process"/>
    <property type="evidence" value="ECO:0007669"/>
    <property type="project" value="UniProtKB-UniRule"/>
</dbReference>
<dbReference type="CDD" id="cd07079">
    <property type="entry name" value="ALDH_F18-19_ProA-GPR"/>
    <property type="match status" value="1"/>
</dbReference>
<dbReference type="FunFam" id="3.40.309.10:FF:000006">
    <property type="entry name" value="Gamma-glutamyl phosphate reductase"/>
    <property type="match status" value="1"/>
</dbReference>
<dbReference type="Gene3D" id="3.40.605.10">
    <property type="entry name" value="Aldehyde Dehydrogenase, Chain A, domain 1"/>
    <property type="match status" value="1"/>
</dbReference>
<dbReference type="Gene3D" id="3.40.309.10">
    <property type="entry name" value="Aldehyde Dehydrogenase, Chain A, domain 2"/>
    <property type="match status" value="1"/>
</dbReference>
<dbReference type="HAMAP" id="MF_00412">
    <property type="entry name" value="ProA"/>
    <property type="match status" value="1"/>
</dbReference>
<dbReference type="InterPro" id="IPR016161">
    <property type="entry name" value="Ald_DH/histidinol_DH"/>
</dbReference>
<dbReference type="InterPro" id="IPR016163">
    <property type="entry name" value="Ald_DH_C"/>
</dbReference>
<dbReference type="InterPro" id="IPR016162">
    <property type="entry name" value="Ald_DH_N"/>
</dbReference>
<dbReference type="InterPro" id="IPR015590">
    <property type="entry name" value="Aldehyde_DH_dom"/>
</dbReference>
<dbReference type="InterPro" id="IPR020593">
    <property type="entry name" value="G-glutamylP_reductase_CS"/>
</dbReference>
<dbReference type="InterPro" id="IPR012134">
    <property type="entry name" value="Glu-5-SA_DH"/>
</dbReference>
<dbReference type="InterPro" id="IPR000965">
    <property type="entry name" value="GPR_dom"/>
</dbReference>
<dbReference type="NCBIfam" id="NF001221">
    <property type="entry name" value="PRK00197.1"/>
    <property type="match status" value="1"/>
</dbReference>
<dbReference type="NCBIfam" id="TIGR00407">
    <property type="entry name" value="proA"/>
    <property type="match status" value="1"/>
</dbReference>
<dbReference type="PANTHER" id="PTHR11063:SF8">
    <property type="entry name" value="DELTA-1-PYRROLINE-5-CARBOXYLATE SYNTHASE"/>
    <property type="match status" value="1"/>
</dbReference>
<dbReference type="PANTHER" id="PTHR11063">
    <property type="entry name" value="GLUTAMATE SEMIALDEHYDE DEHYDROGENASE"/>
    <property type="match status" value="1"/>
</dbReference>
<dbReference type="Pfam" id="PF00171">
    <property type="entry name" value="Aldedh"/>
    <property type="match status" value="2"/>
</dbReference>
<dbReference type="PIRSF" id="PIRSF000151">
    <property type="entry name" value="GPR"/>
    <property type="match status" value="1"/>
</dbReference>
<dbReference type="SUPFAM" id="SSF53720">
    <property type="entry name" value="ALDH-like"/>
    <property type="match status" value="1"/>
</dbReference>
<dbReference type="PROSITE" id="PS01223">
    <property type="entry name" value="PROA"/>
    <property type="match status" value="1"/>
</dbReference>
<gene>
    <name evidence="1" type="primary">proA</name>
    <name type="ordered locus">CLH_0047</name>
</gene>
<keyword id="KW-0028">Amino-acid biosynthesis</keyword>
<keyword id="KW-0963">Cytoplasm</keyword>
<keyword id="KW-0521">NADP</keyword>
<keyword id="KW-0560">Oxidoreductase</keyword>
<keyword id="KW-0641">Proline biosynthesis</keyword>
<evidence type="ECO:0000255" key="1">
    <source>
        <dbReference type="HAMAP-Rule" id="MF_00412"/>
    </source>
</evidence>
<sequence>MNELILKGERAKEASYVLMNATTSEKNDALIKMGQKLLENKDYIIAENEKDLENAMLKGTSKAMLDRLSLDEKRLEDMADGLNQLVNLNDPIGEVITMWKRPNGLQIGKQRVPMGVIGIIYEARPNVTCDAAGLCLKAGNAVILRGGSEAINSNKAIVKALCEGIKESGLPEYSLQLIENTSREIANEMMRLNEYIDVLIPRGGAGLIQAVVKNATVPVIETGVGNCHVYVDEEADFKMAEDIIINAKTSRPAVCNAEEKLLVNEKIAEEFLPKIISALREKNVEVRGDSNVMKIADDVKEATDEDWGKEYLDFIIGIKIVNNIDEAIKHINRYGSGHSEAIITNNYQNSQKFLQRVDAAAVYVNASTRFTDGCEFGFGAEIGISTQKLHARGPMGLNELTTTKYIIYGNGQIR</sequence>
<organism>
    <name type="scientific">Clostridium botulinum (strain Alaska E43 / Type E3)</name>
    <dbReference type="NCBI Taxonomy" id="508767"/>
    <lineage>
        <taxon>Bacteria</taxon>
        <taxon>Bacillati</taxon>
        <taxon>Bacillota</taxon>
        <taxon>Clostridia</taxon>
        <taxon>Eubacteriales</taxon>
        <taxon>Clostridiaceae</taxon>
        <taxon>Clostridium</taxon>
    </lineage>
</organism>
<proteinExistence type="inferred from homology"/>
<feature type="chain" id="PRO_1000193587" description="Gamma-glutamyl phosphate reductase">
    <location>
        <begin position="1"/>
        <end position="414"/>
    </location>
</feature>
<comment type="function">
    <text evidence="1">Catalyzes the NADPH-dependent reduction of L-glutamate 5-phosphate into L-glutamate 5-semialdehyde and phosphate. The product spontaneously undergoes cyclization to form 1-pyrroline-5-carboxylate.</text>
</comment>
<comment type="catalytic activity">
    <reaction evidence="1">
        <text>L-glutamate 5-semialdehyde + phosphate + NADP(+) = L-glutamyl 5-phosphate + NADPH + H(+)</text>
        <dbReference type="Rhea" id="RHEA:19541"/>
        <dbReference type="ChEBI" id="CHEBI:15378"/>
        <dbReference type="ChEBI" id="CHEBI:43474"/>
        <dbReference type="ChEBI" id="CHEBI:57783"/>
        <dbReference type="ChEBI" id="CHEBI:58066"/>
        <dbReference type="ChEBI" id="CHEBI:58274"/>
        <dbReference type="ChEBI" id="CHEBI:58349"/>
        <dbReference type="EC" id="1.2.1.41"/>
    </reaction>
</comment>
<comment type="pathway">
    <text evidence="1">Amino-acid biosynthesis; L-proline biosynthesis; L-glutamate 5-semialdehyde from L-glutamate: step 2/2.</text>
</comment>
<comment type="subcellular location">
    <subcellularLocation>
        <location evidence="1">Cytoplasm</location>
    </subcellularLocation>
</comment>
<comment type="similarity">
    <text evidence="1">Belongs to the gamma-glutamyl phosphate reductase family.</text>
</comment>
<name>PROA_CLOBA</name>